<organism>
    <name type="scientific">Synechococcus sp. (strain CC9311)</name>
    <dbReference type="NCBI Taxonomy" id="64471"/>
    <lineage>
        <taxon>Bacteria</taxon>
        <taxon>Bacillati</taxon>
        <taxon>Cyanobacteriota</taxon>
        <taxon>Cyanophyceae</taxon>
        <taxon>Synechococcales</taxon>
        <taxon>Synechococcaceae</taxon>
        <taxon>Synechococcus</taxon>
    </lineage>
</organism>
<accession>Q0IAK1</accession>
<evidence type="ECO:0000255" key="1">
    <source>
        <dbReference type="HAMAP-Rule" id="MF_01329"/>
    </source>
</evidence>
<evidence type="ECO:0000305" key="2"/>
<dbReference type="EMBL" id="CP000435">
    <property type="protein sequence ID" value="ABI45661.1"/>
    <property type="status" value="ALT_INIT"/>
    <property type="molecule type" value="Genomic_DNA"/>
</dbReference>
<dbReference type="RefSeq" id="WP_038013133.1">
    <property type="nucleotide sequence ID" value="NC_008319.1"/>
</dbReference>
<dbReference type="SMR" id="Q0IAK1"/>
<dbReference type="STRING" id="64471.sync_1313"/>
<dbReference type="KEGG" id="syg:sync_1313"/>
<dbReference type="eggNOG" id="ENOG5030V3X">
    <property type="taxonomic scope" value="Bacteria"/>
</dbReference>
<dbReference type="HOGENOM" id="CLU_3030878_0_0_3"/>
<dbReference type="OrthoDB" id="560518at2"/>
<dbReference type="Proteomes" id="UP000001961">
    <property type="component" value="Chromosome"/>
</dbReference>
<dbReference type="GO" id="GO:0009523">
    <property type="term" value="C:photosystem II"/>
    <property type="evidence" value="ECO:0007669"/>
    <property type="project" value="UniProtKB-KW"/>
</dbReference>
<dbReference type="GO" id="GO:0031676">
    <property type="term" value="C:plasma membrane-derived thylakoid membrane"/>
    <property type="evidence" value="ECO:0007669"/>
    <property type="project" value="UniProtKB-SubCell"/>
</dbReference>
<dbReference type="GO" id="GO:0015979">
    <property type="term" value="P:photosynthesis"/>
    <property type="evidence" value="ECO:0007669"/>
    <property type="project" value="UniProtKB-KW"/>
</dbReference>
<dbReference type="HAMAP" id="MF_01329">
    <property type="entry name" value="PSII_Psb30_Ycf12"/>
    <property type="match status" value="1"/>
</dbReference>
<dbReference type="InterPro" id="IPR010284">
    <property type="entry name" value="PSII_Ycf12_core-subunit"/>
</dbReference>
<dbReference type="NCBIfam" id="NF010239">
    <property type="entry name" value="PRK13686.1"/>
    <property type="match status" value="1"/>
</dbReference>
<dbReference type="Pfam" id="PF05969">
    <property type="entry name" value="PSII_Ycf12"/>
    <property type="match status" value="1"/>
</dbReference>
<proteinExistence type="inferred from homology"/>
<reference key="1">
    <citation type="journal article" date="2006" name="Proc. Natl. Acad. Sci. U.S.A.">
        <title>Genome sequence of Synechococcus CC9311: insights into adaptation to a coastal environment.</title>
        <authorList>
            <person name="Palenik B."/>
            <person name="Ren Q."/>
            <person name="Dupont C.L."/>
            <person name="Myers G.S."/>
            <person name="Heidelberg J.F."/>
            <person name="Badger J.H."/>
            <person name="Madupu R."/>
            <person name="Nelson W.C."/>
            <person name="Brinkac L.M."/>
            <person name="Dodson R.J."/>
            <person name="Durkin A.S."/>
            <person name="Daugherty S.C."/>
            <person name="Sullivan S.A."/>
            <person name="Khouri H."/>
            <person name="Mohamoud Y."/>
            <person name="Halpin R."/>
            <person name="Paulsen I.T."/>
        </authorList>
    </citation>
    <scope>NUCLEOTIDE SEQUENCE [LARGE SCALE GENOMIC DNA]</scope>
    <source>
        <strain>CC9311</strain>
    </source>
</reference>
<sequence length="35" mass="3777">MGFDIHLIANFGALALITLAGPAVIFILFYRRGAL</sequence>
<name>PSB30_SYNS3</name>
<gene>
    <name evidence="1" type="primary">psb30</name>
    <name evidence="1" type="synonym">ycf12</name>
    <name type="ordered locus">sync_1313</name>
</gene>
<feature type="chain" id="PRO_0000342347" description="Photosystem II reaction center protein Psb30">
    <location>
        <begin position="1"/>
        <end position="35"/>
    </location>
</feature>
<feature type="transmembrane region" description="Helical" evidence="1">
    <location>
        <begin position="7"/>
        <end position="27"/>
    </location>
</feature>
<keyword id="KW-0472">Membrane</keyword>
<keyword id="KW-0602">Photosynthesis</keyword>
<keyword id="KW-0604">Photosystem II</keyword>
<keyword id="KW-1185">Reference proteome</keyword>
<keyword id="KW-0793">Thylakoid</keyword>
<keyword id="KW-0812">Transmembrane</keyword>
<keyword id="KW-1133">Transmembrane helix</keyword>
<protein>
    <recommendedName>
        <fullName evidence="1">Photosystem II reaction center protein Psb30</fullName>
    </recommendedName>
    <alternativeName>
        <fullName evidence="1">Photosystem II reaction center protein Ycf12</fullName>
    </alternativeName>
</protein>
<comment type="function">
    <text evidence="1">A core subunit of photosystem II (PSII), probably helps stabilize the reaction center.</text>
</comment>
<comment type="subunit">
    <text evidence="1">PSII is composed of 1 copy each of membrane proteins PsbA, PsbB, PsbC, PsbD, PsbE, PsbF, PsbH, PsbI, PsbJ, PsbK, PsbL, PsbM, PsbT, PsbX, PsbY, PsbZ, Psb30/Ycf12, peripheral proteins PsbO, CyanoQ (PsbQ), PsbU, PsbV and a large number of cofactors. It forms dimeric complexes.</text>
</comment>
<comment type="subcellular location">
    <subcellularLocation>
        <location evidence="1">Cellular thylakoid membrane</location>
        <topology evidence="1">Single-pass membrane protein</topology>
    </subcellularLocation>
</comment>
<comment type="similarity">
    <text evidence="1">Belongs to the Psb30/Ycf12 family.</text>
</comment>
<comment type="sequence caution" evidence="2">
    <conflict type="erroneous initiation">
        <sequence resource="EMBL-CDS" id="ABI45661"/>
    </conflict>
    <text>Extended N-terminus.</text>
</comment>